<proteinExistence type="inferred from homology"/>
<keyword id="KW-0067">ATP-binding</keyword>
<keyword id="KW-0963">Cytoplasm</keyword>
<keyword id="KW-0418">Kinase</keyword>
<keyword id="KW-0547">Nucleotide-binding</keyword>
<keyword id="KW-0665">Pyrimidine biosynthesis</keyword>
<keyword id="KW-0808">Transferase</keyword>
<comment type="function">
    <text evidence="1">Catalyzes the reversible phosphorylation of UMP to UDP.</text>
</comment>
<comment type="catalytic activity">
    <reaction evidence="1">
        <text>UMP + ATP = UDP + ADP</text>
        <dbReference type="Rhea" id="RHEA:24400"/>
        <dbReference type="ChEBI" id="CHEBI:30616"/>
        <dbReference type="ChEBI" id="CHEBI:57865"/>
        <dbReference type="ChEBI" id="CHEBI:58223"/>
        <dbReference type="ChEBI" id="CHEBI:456216"/>
        <dbReference type="EC" id="2.7.4.22"/>
    </reaction>
</comment>
<comment type="activity regulation">
    <text evidence="1">Inhibited by UTP.</text>
</comment>
<comment type="pathway">
    <text evidence="1">Pyrimidine metabolism; CTP biosynthesis via de novo pathway; UDP from UMP (UMPK route): step 1/1.</text>
</comment>
<comment type="subunit">
    <text evidence="1">Homohexamer.</text>
</comment>
<comment type="subcellular location">
    <subcellularLocation>
        <location evidence="1">Cytoplasm</location>
    </subcellularLocation>
</comment>
<comment type="similarity">
    <text evidence="1">Belongs to the UMP kinase family.</text>
</comment>
<evidence type="ECO:0000255" key="1">
    <source>
        <dbReference type="HAMAP-Rule" id="MF_01220"/>
    </source>
</evidence>
<feature type="chain" id="PRO_0000323910" description="Uridylate kinase">
    <location>
        <begin position="1"/>
        <end position="241"/>
    </location>
</feature>
<feature type="binding site" evidence="1">
    <location>
        <begin position="10"/>
        <end position="13"/>
    </location>
    <ligand>
        <name>ATP</name>
        <dbReference type="ChEBI" id="CHEBI:30616"/>
    </ligand>
</feature>
<feature type="binding site" evidence="1">
    <location>
        <position position="53"/>
    </location>
    <ligand>
        <name>ATP</name>
        <dbReference type="ChEBI" id="CHEBI:30616"/>
    </ligand>
</feature>
<feature type="binding site" evidence="1">
    <location>
        <position position="57"/>
    </location>
    <ligand>
        <name>ATP</name>
        <dbReference type="ChEBI" id="CHEBI:30616"/>
    </ligand>
</feature>
<feature type="binding site" evidence="1">
    <location>
        <position position="72"/>
    </location>
    <ligand>
        <name>UMP</name>
        <dbReference type="ChEBI" id="CHEBI:57865"/>
    </ligand>
</feature>
<feature type="binding site" evidence="1">
    <location>
        <begin position="133"/>
        <end position="140"/>
    </location>
    <ligand>
        <name>UMP</name>
        <dbReference type="ChEBI" id="CHEBI:57865"/>
    </ligand>
</feature>
<feature type="binding site" evidence="1">
    <location>
        <position position="161"/>
    </location>
    <ligand>
        <name>ATP</name>
        <dbReference type="ChEBI" id="CHEBI:30616"/>
    </ligand>
</feature>
<feature type="binding site" evidence="1">
    <location>
        <position position="167"/>
    </location>
    <ligand>
        <name>ATP</name>
        <dbReference type="ChEBI" id="CHEBI:30616"/>
    </ligand>
</feature>
<feature type="binding site" evidence="1">
    <location>
        <position position="170"/>
    </location>
    <ligand>
        <name>ATP</name>
        <dbReference type="ChEBI" id="CHEBI:30616"/>
    </ligand>
</feature>
<accession>Q6YR50</accession>
<name>PYRH_ONYPE</name>
<reference key="1">
    <citation type="journal article" date="2004" name="Nat. Genet.">
        <title>Reductive evolution suggested from the complete genome sequence of a plant-pathogenic phytoplasma.</title>
        <authorList>
            <person name="Oshima K."/>
            <person name="Kakizawa S."/>
            <person name="Nishigawa H."/>
            <person name="Jung H.-Y."/>
            <person name="Wei W."/>
            <person name="Suzuki S."/>
            <person name="Arashida R."/>
            <person name="Nakata D."/>
            <person name="Miyata S."/>
            <person name="Ugaki M."/>
            <person name="Namba S."/>
        </authorList>
    </citation>
    <scope>NUCLEOTIDE SEQUENCE [LARGE SCALE GENOMIC DNA]</scope>
    <source>
        <strain>OY-M</strain>
    </source>
</reference>
<protein>
    <recommendedName>
        <fullName evidence="1">Uridylate kinase</fullName>
        <shortName evidence="1">UK</shortName>
        <ecNumber evidence="1">2.7.4.22</ecNumber>
    </recommendedName>
    <alternativeName>
        <fullName evidence="1">Uridine monophosphate kinase</fullName>
        <shortName evidence="1">UMP kinase</shortName>
        <shortName evidence="1">UMPK</shortName>
    </alternativeName>
</protein>
<sequence length="241" mass="26612">MWMHKKILLKLSGESLKGESSYGIDPRTIKKIAWEIKEIKDLGVKIAIIVGAGNLWRGRTGEELGMDRSQADYMGMLGTIMNSLALQDALEQTNTITRVMTAFPVSSVAEPYIRRKAIRHLEKDRVVILGAGAGSPYFSTDTAAALRAAELNIDVILMAKNNIEGVYNKDPKKHQDAVLIKHMKHQQILSQRLAVMDITAASLCLENNIDILVFNMLKKGNIKKVVLKEGNIGTVISSKGE</sequence>
<gene>
    <name evidence="1" type="primary">pyrH</name>
    <name type="ordered locus">PAM_167</name>
</gene>
<organism>
    <name type="scientific">Onion yellows phytoplasma (strain OY-M)</name>
    <dbReference type="NCBI Taxonomy" id="262768"/>
    <lineage>
        <taxon>Bacteria</taxon>
        <taxon>Bacillati</taxon>
        <taxon>Mycoplasmatota</taxon>
        <taxon>Mollicutes</taxon>
        <taxon>Acholeplasmatales</taxon>
        <taxon>Acholeplasmataceae</taxon>
        <taxon>Candidatus Phytoplasma</taxon>
        <taxon>16SrI (Aster yellows group)</taxon>
    </lineage>
</organism>
<dbReference type="EC" id="2.7.4.22" evidence="1"/>
<dbReference type="EMBL" id="AP006628">
    <property type="protein sequence ID" value="BAD04252.1"/>
    <property type="molecule type" value="Genomic_DNA"/>
</dbReference>
<dbReference type="SMR" id="Q6YR50"/>
<dbReference type="STRING" id="262768.PAM_167"/>
<dbReference type="KEGG" id="poy:PAM_167"/>
<dbReference type="eggNOG" id="COG0528">
    <property type="taxonomic scope" value="Bacteria"/>
</dbReference>
<dbReference type="HOGENOM" id="CLU_033861_0_0_14"/>
<dbReference type="BioCyc" id="OYEL262768:G1G26-206-MONOMER"/>
<dbReference type="UniPathway" id="UPA00159">
    <property type="reaction ID" value="UER00275"/>
</dbReference>
<dbReference type="Proteomes" id="UP000002523">
    <property type="component" value="Chromosome"/>
</dbReference>
<dbReference type="GO" id="GO:0005737">
    <property type="term" value="C:cytoplasm"/>
    <property type="evidence" value="ECO:0007669"/>
    <property type="project" value="UniProtKB-SubCell"/>
</dbReference>
<dbReference type="GO" id="GO:0005524">
    <property type="term" value="F:ATP binding"/>
    <property type="evidence" value="ECO:0007669"/>
    <property type="project" value="UniProtKB-KW"/>
</dbReference>
<dbReference type="GO" id="GO:0033862">
    <property type="term" value="F:UMP kinase activity"/>
    <property type="evidence" value="ECO:0007669"/>
    <property type="project" value="UniProtKB-EC"/>
</dbReference>
<dbReference type="GO" id="GO:0044210">
    <property type="term" value="P:'de novo' CTP biosynthetic process"/>
    <property type="evidence" value="ECO:0007669"/>
    <property type="project" value="UniProtKB-UniRule"/>
</dbReference>
<dbReference type="GO" id="GO:0006225">
    <property type="term" value="P:UDP biosynthetic process"/>
    <property type="evidence" value="ECO:0007669"/>
    <property type="project" value="TreeGrafter"/>
</dbReference>
<dbReference type="CDD" id="cd04254">
    <property type="entry name" value="AAK_UMPK-PyrH-Ec"/>
    <property type="match status" value="1"/>
</dbReference>
<dbReference type="FunFam" id="3.40.1160.10:FF:000001">
    <property type="entry name" value="Uridylate kinase"/>
    <property type="match status" value="1"/>
</dbReference>
<dbReference type="Gene3D" id="3.40.1160.10">
    <property type="entry name" value="Acetylglutamate kinase-like"/>
    <property type="match status" value="1"/>
</dbReference>
<dbReference type="HAMAP" id="MF_01220_B">
    <property type="entry name" value="PyrH_B"/>
    <property type="match status" value="1"/>
</dbReference>
<dbReference type="InterPro" id="IPR036393">
    <property type="entry name" value="AceGlu_kinase-like_sf"/>
</dbReference>
<dbReference type="InterPro" id="IPR001048">
    <property type="entry name" value="Asp/Glu/Uridylate_kinase"/>
</dbReference>
<dbReference type="InterPro" id="IPR011817">
    <property type="entry name" value="Uridylate_kinase"/>
</dbReference>
<dbReference type="InterPro" id="IPR015963">
    <property type="entry name" value="Uridylate_kinase_bac"/>
</dbReference>
<dbReference type="NCBIfam" id="TIGR02075">
    <property type="entry name" value="pyrH_bact"/>
    <property type="match status" value="1"/>
</dbReference>
<dbReference type="PANTHER" id="PTHR42833">
    <property type="entry name" value="URIDYLATE KINASE"/>
    <property type="match status" value="1"/>
</dbReference>
<dbReference type="PANTHER" id="PTHR42833:SF4">
    <property type="entry name" value="URIDYLATE KINASE PUMPKIN, CHLOROPLASTIC"/>
    <property type="match status" value="1"/>
</dbReference>
<dbReference type="Pfam" id="PF00696">
    <property type="entry name" value="AA_kinase"/>
    <property type="match status" value="1"/>
</dbReference>
<dbReference type="PIRSF" id="PIRSF005650">
    <property type="entry name" value="Uridylate_kin"/>
    <property type="match status" value="1"/>
</dbReference>
<dbReference type="SUPFAM" id="SSF53633">
    <property type="entry name" value="Carbamate kinase-like"/>
    <property type="match status" value="1"/>
</dbReference>